<gene>
    <name evidence="1" type="primary">rpoC1</name>
</gene>
<keyword id="KW-0150">Chloroplast</keyword>
<keyword id="KW-0240">DNA-directed RNA polymerase</keyword>
<keyword id="KW-0460">Magnesium</keyword>
<keyword id="KW-0479">Metal-binding</keyword>
<keyword id="KW-0548">Nucleotidyltransferase</keyword>
<keyword id="KW-0934">Plastid</keyword>
<keyword id="KW-0804">Transcription</keyword>
<keyword id="KW-0808">Transferase</keyword>
<keyword id="KW-0862">Zinc</keyword>
<name>RPOC1_BIGNA</name>
<evidence type="ECO:0000255" key="1">
    <source>
        <dbReference type="HAMAP-Rule" id="MF_01323"/>
    </source>
</evidence>
<evidence type="ECO:0000305" key="2"/>
<dbReference type="EC" id="2.7.7.6" evidence="1"/>
<dbReference type="EMBL" id="DQ851108">
    <property type="protein sequence ID" value="ABG91441.1"/>
    <property type="molecule type" value="Genomic_DNA"/>
</dbReference>
<dbReference type="RefSeq" id="YP_778609.1">
    <property type="nucleotide sequence ID" value="NC_008408.1"/>
</dbReference>
<dbReference type="SMR" id="Q06J18"/>
<dbReference type="GeneID" id="4353026"/>
<dbReference type="GO" id="GO:0009507">
    <property type="term" value="C:chloroplast"/>
    <property type="evidence" value="ECO:0007669"/>
    <property type="project" value="UniProtKB-SubCell"/>
</dbReference>
<dbReference type="GO" id="GO:0000428">
    <property type="term" value="C:DNA-directed RNA polymerase complex"/>
    <property type="evidence" value="ECO:0007669"/>
    <property type="project" value="UniProtKB-KW"/>
</dbReference>
<dbReference type="GO" id="GO:0005739">
    <property type="term" value="C:mitochondrion"/>
    <property type="evidence" value="ECO:0007669"/>
    <property type="project" value="GOC"/>
</dbReference>
<dbReference type="GO" id="GO:0003677">
    <property type="term" value="F:DNA binding"/>
    <property type="evidence" value="ECO:0007669"/>
    <property type="project" value="UniProtKB-UniRule"/>
</dbReference>
<dbReference type="GO" id="GO:0003899">
    <property type="term" value="F:DNA-directed RNA polymerase activity"/>
    <property type="evidence" value="ECO:0007669"/>
    <property type="project" value="UniProtKB-UniRule"/>
</dbReference>
<dbReference type="GO" id="GO:0000287">
    <property type="term" value="F:magnesium ion binding"/>
    <property type="evidence" value="ECO:0007669"/>
    <property type="project" value="UniProtKB-UniRule"/>
</dbReference>
<dbReference type="GO" id="GO:0008270">
    <property type="term" value="F:zinc ion binding"/>
    <property type="evidence" value="ECO:0007669"/>
    <property type="project" value="UniProtKB-UniRule"/>
</dbReference>
<dbReference type="GO" id="GO:0006351">
    <property type="term" value="P:DNA-templated transcription"/>
    <property type="evidence" value="ECO:0007669"/>
    <property type="project" value="UniProtKB-UniRule"/>
</dbReference>
<dbReference type="Gene3D" id="1.10.40.90">
    <property type="match status" value="1"/>
</dbReference>
<dbReference type="Gene3D" id="2.40.40.20">
    <property type="match status" value="1"/>
</dbReference>
<dbReference type="Gene3D" id="4.10.860.120">
    <property type="entry name" value="RNA polymerase II, clamp domain"/>
    <property type="match status" value="1"/>
</dbReference>
<dbReference type="Gene3D" id="1.10.274.100">
    <property type="entry name" value="RNA polymerase Rpb1, domain 3"/>
    <property type="match status" value="1"/>
</dbReference>
<dbReference type="HAMAP" id="MF_01323">
    <property type="entry name" value="RNApol_bact_RpoC1"/>
    <property type="match status" value="1"/>
</dbReference>
<dbReference type="InterPro" id="IPR045867">
    <property type="entry name" value="DNA-dir_RpoC_beta_prime"/>
</dbReference>
<dbReference type="InterPro" id="IPR000722">
    <property type="entry name" value="RNA_pol_asu"/>
</dbReference>
<dbReference type="InterPro" id="IPR006592">
    <property type="entry name" value="RNA_pol_N"/>
</dbReference>
<dbReference type="InterPro" id="IPR007080">
    <property type="entry name" value="RNA_pol_Rpb1_1"/>
</dbReference>
<dbReference type="InterPro" id="IPR007066">
    <property type="entry name" value="RNA_pol_Rpb1_3"/>
</dbReference>
<dbReference type="InterPro" id="IPR042102">
    <property type="entry name" value="RNA_pol_Rpb1_3_sf"/>
</dbReference>
<dbReference type="InterPro" id="IPR044893">
    <property type="entry name" value="RNA_pol_Rpb1_clamp_domain"/>
</dbReference>
<dbReference type="InterPro" id="IPR034678">
    <property type="entry name" value="RNApol_RpoC1"/>
</dbReference>
<dbReference type="PANTHER" id="PTHR19376">
    <property type="entry name" value="DNA-DIRECTED RNA POLYMERASE"/>
    <property type="match status" value="1"/>
</dbReference>
<dbReference type="PANTHER" id="PTHR19376:SF54">
    <property type="entry name" value="DNA-DIRECTED RNA POLYMERASE SUBUNIT BETA"/>
    <property type="match status" value="1"/>
</dbReference>
<dbReference type="Pfam" id="PF04997">
    <property type="entry name" value="RNA_pol_Rpb1_1"/>
    <property type="match status" value="1"/>
</dbReference>
<dbReference type="Pfam" id="PF00623">
    <property type="entry name" value="RNA_pol_Rpb1_2"/>
    <property type="match status" value="1"/>
</dbReference>
<dbReference type="Pfam" id="PF04983">
    <property type="entry name" value="RNA_pol_Rpb1_3"/>
    <property type="match status" value="1"/>
</dbReference>
<dbReference type="SMART" id="SM00663">
    <property type="entry name" value="RPOLA_N"/>
    <property type="match status" value="1"/>
</dbReference>
<dbReference type="SUPFAM" id="SSF64484">
    <property type="entry name" value="beta and beta-prime subunits of DNA dependent RNA-polymerase"/>
    <property type="match status" value="1"/>
</dbReference>
<geneLocation type="chloroplast"/>
<feature type="chain" id="PRO_0000310397" description="DNA-directed RNA polymerase subunit beta'">
    <location>
        <begin position="1"/>
        <end position="760"/>
    </location>
</feature>
<feature type="binding site" evidence="1">
    <location>
        <position position="76"/>
    </location>
    <ligand>
        <name>Zn(2+)</name>
        <dbReference type="ChEBI" id="CHEBI:29105"/>
    </ligand>
</feature>
<feature type="binding site" evidence="1">
    <location>
        <position position="78"/>
    </location>
    <ligand>
        <name>Zn(2+)</name>
        <dbReference type="ChEBI" id="CHEBI:29105"/>
    </ligand>
</feature>
<feature type="binding site" evidence="1">
    <location>
        <position position="90"/>
    </location>
    <ligand>
        <name>Zn(2+)</name>
        <dbReference type="ChEBI" id="CHEBI:29105"/>
    </ligand>
</feature>
<feature type="binding site" evidence="1">
    <location>
        <position position="93"/>
    </location>
    <ligand>
        <name>Zn(2+)</name>
        <dbReference type="ChEBI" id="CHEBI:29105"/>
    </ligand>
</feature>
<feature type="binding site" evidence="1">
    <location>
        <position position="594"/>
    </location>
    <ligand>
        <name>Mg(2+)</name>
        <dbReference type="ChEBI" id="CHEBI:18420"/>
    </ligand>
</feature>
<feature type="binding site" evidence="1">
    <location>
        <position position="596"/>
    </location>
    <ligand>
        <name>Mg(2+)</name>
        <dbReference type="ChEBI" id="CHEBI:18420"/>
    </ligand>
</feature>
<feature type="binding site" evidence="1">
    <location>
        <position position="598"/>
    </location>
    <ligand>
        <name>Mg(2+)</name>
        <dbReference type="ChEBI" id="CHEBI:18420"/>
    </ligand>
</feature>
<proteinExistence type="inferred from homology"/>
<organism>
    <name type="scientific">Bigelowiella natans</name>
    <name type="common">Pedinomonas minutissima</name>
    <name type="synonym">Chlorarachnion sp. (strain CCMP621)</name>
    <dbReference type="NCBI Taxonomy" id="227086"/>
    <lineage>
        <taxon>Eukaryota</taxon>
        <taxon>Sar</taxon>
        <taxon>Rhizaria</taxon>
        <taxon>Cercozoa</taxon>
        <taxon>Chlorarachniophyceae</taxon>
        <taxon>Bigelowiella</taxon>
    </lineage>
</organism>
<comment type="function">
    <text evidence="1">DNA-dependent RNA polymerase catalyzes the transcription of DNA into RNA using the four ribonucleoside triphosphates as substrates.</text>
</comment>
<comment type="catalytic activity">
    <reaction evidence="1">
        <text>RNA(n) + a ribonucleoside 5'-triphosphate = RNA(n+1) + diphosphate</text>
        <dbReference type="Rhea" id="RHEA:21248"/>
        <dbReference type="Rhea" id="RHEA-COMP:14527"/>
        <dbReference type="Rhea" id="RHEA-COMP:17342"/>
        <dbReference type="ChEBI" id="CHEBI:33019"/>
        <dbReference type="ChEBI" id="CHEBI:61557"/>
        <dbReference type="ChEBI" id="CHEBI:140395"/>
        <dbReference type="EC" id="2.7.7.6"/>
    </reaction>
</comment>
<comment type="cofactor">
    <cofactor evidence="1">
        <name>Mg(2+)</name>
        <dbReference type="ChEBI" id="CHEBI:18420"/>
    </cofactor>
    <text evidence="1">Binds 1 Mg(2+) ion per subunit.</text>
</comment>
<comment type="cofactor">
    <cofactor evidence="1">
        <name>Zn(2+)</name>
        <dbReference type="ChEBI" id="CHEBI:29105"/>
    </cofactor>
    <text evidence="1">Binds 1 Zn(2+) ion per subunit.</text>
</comment>
<comment type="subunit">
    <text evidence="1">In plastids the minimal PEP RNA polymerase catalytic core is composed of four subunits: alpha, beta, beta', and beta''. When a (nuclear-encoded) sigma factor is associated with the core the holoenzyme is formed, which can initiate transcription.</text>
</comment>
<comment type="subcellular location">
    <subcellularLocation>
        <location evidence="1">Plastid</location>
        <location evidence="1">Chloroplast</location>
    </subcellularLocation>
</comment>
<comment type="similarity">
    <text evidence="1 2">Belongs to the RNA polymerase beta' chain family. RpoC1 subfamily.</text>
</comment>
<protein>
    <recommendedName>
        <fullName evidence="1">DNA-directed RNA polymerase subunit beta'</fullName>
        <ecNumber evidence="1">2.7.7.6</ecNumber>
    </recommendedName>
    <alternativeName>
        <fullName evidence="1">PEP</fullName>
    </alternativeName>
    <alternativeName>
        <fullName evidence="1">Plastid-encoded RNA polymerase subunit beta'</fullName>
        <shortName evidence="1">RNA polymerase subunit beta'</shortName>
    </alternativeName>
</protein>
<accession>Q06J18</accession>
<reference key="1">
    <citation type="journal article" date="2007" name="Mol. Biol. Evol.">
        <title>The complete chloroplast genome of the chlorarachniophyte Bigelowiella natans: evidence for independent origins of chlorarachniophyte and euglenid secondary endosymbionts.</title>
        <authorList>
            <person name="Rogers M.B."/>
            <person name="Gilson P.R."/>
            <person name="Su V."/>
            <person name="McFadden G.I."/>
            <person name="Keeling P.J."/>
        </authorList>
    </citation>
    <scope>NUCLEOTIDE SEQUENCE [LARGE SCALE GENOMIC DNA]</scope>
</reference>
<sequence length="760" mass="89768">MNYYSIQNSRDSSISSIEIRICSSKSIVKKSSRILPNGNIVGEIKTAQTMNYKTLKPENSGLFCEQTFGPIKDFECACGKKYENEFIGFCAICGIEYASSQVRRNRLGYIKLVSPVVHIWYLKYISILLDIPLKSIESIVYSTDGIIFKNFFQKPKKNQILKKETFEITENLNNTYFKDSINLKYSLHVQKNIISYLKNLKQAVFILKTKQDQQLKYNFSYLYYTLNNFYSLSYSFQWEAKKQWNTIIWFFKYKQRMKENFIKIDPLQKKLNDEYFEKTFLFGTSILYCWLKYFDYNFQLLNLERQIRFTVFEIKEEIKELSGILFSYFFQKQQFISFQKKIKKLNWKKNKVFRRLKLIMYFRQAKLQPKWMILSSLPVLPPDLRPIVELGSNKIAVSDLNKSYQTIILRNLRLKKFYNNSAFNEFTEEIRYTKRLLQESVDELIQQDKSKKNNNISSKSLSDILKGKRGRFRQNLLGKRVDYSGRSVIIVDPELKLHECGIPLKMAIELFYPFIIQYLISFNLTKTIPGAKHIIHTKASFLNEIIHFVLNNYLVLLNRAPTLHKLGIQAFKPKLVTGKAIKLHPLVCPAFNADFDGDQMGMHIPLSFESRAESWKLLWSRNNLLLSSMGSPILTPGQDVVLGCYYLTSNLLDKVKTYIKPCHLNKKGENWSIYFNNLNDVLKAYNQNKVNIHTEIWIKWSENIMFENNSLDLRRLEVYSGKFFRFQYENYQINYNLKGYQLSQYIKTTVGRVIFNSLLY</sequence>